<protein>
    <recommendedName>
        <fullName evidence="1">tRNA-2-methylthio-N(6)-dimethylallyladenosine synthase</fullName>
        <ecNumber evidence="1">2.8.4.3</ecNumber>
    </recommendedName>
    <alternativeName>
        <fullName evidence="1">(Dimethylallyl)adenosine tRNA methylthiotransferase MiaB</fullName>
    </alternativeName>
    <alternativeName>
        <fullName evidence="1">tRNA-i(6)A37 methylthiotransferase</fullName>
    </alternativeName>
</protein>
<accession>B7HLA6</accession>
<reference key="1">
    <citation type="submission" date="2008-10" db="EMBL/GenBank/DDBJ databases">
        <title>Genome sequence of Bacillus cereus AH187.</title>
        <authorList>
            <person name="Dodson R.J."/>
            <person name="Durkin A.S."/>
            <person name="Rosovitz M.J."/>
            <person name="Rasko D.A."/>
            <person name="Kolsto A.B."/>
            <person name="Okstad O.A."/>
            <person name="Ravel J."/>
            <person name="Sutton G."/>
        </authorList>
    </citation>
    <scope>NUCLEOTIDE SEQUENCE [LARGE SCALE GENOMIC DNA]</scope>
    <source>
        <strain>AH187</strain>
    </source>
</reference>
<evidence type="ECO:0000255" key="1">
    <source>
        <dbReference type="HAMAP-Rule" id="MF_01864"/>
    </source>
</evidence>
<evidence type="ECO:0000255" key="2">
    <source>
        <dbReference type="PROSITE-ProRule" id="PRU01266"/>
    </source>
</evidence>
<evidence type="ECO:0000256" key="3">
    <source>
        <dbReference type="SAM" id="MobiDB-lite"/>
    </source>
</evidence>
<proteinExistence type="inferred from homology"/>
<sequence>MNEQQRLASQQVNSSTKKEEKDYSKYFESVYQPPSLKDAKKRGKEEVKIERDFGLPEEFRNFGTGRKFYIRTYGCQMNEHDTEVMAGIFTALGYEPTFSTEEADVVLLNTCAIRENAENKVFGELGHLKALKRRNPDLLIGVCGCMSQEESVVNKIMQKNQHVDMVFGTHNIHRLPYILKDAMFSKETVVEVWSKEGDVIENLPKVRRGDIKAWVNIMYGCDKFCTYCIVPYTRGKERSRRPEDIIQEIRHLAANGYKEITLLGQNVNAYGKDFEDIEYGLGDLMDELRKVDIARIRFTTSHPRDFDDHLIEVLGKGGNLVEHIHLPVQSGSTEMLKIMARKYSREHYLELVRKIKEAIPNAVLTTDIIVGFPNETDEQFEETMSLYREVGFDTAFTFIYSPREGTPAAKMKDNVPMEVKKERLQRLNALVNKLAIEKNNRYKGQIVEVLVDGESKNNPEVLAGYTRTNKLVNFVAPKSLIGQLVKVKVTDAKTWSLNGELVEEPIEVE</sequence>
<name>MIAB_BACC7</name>
<dbReference type="EC" id="2.8.4.3" evidence="1"/>
<dbReference type="EMBL" id="CP001177">
    <property type="protein sequence ID" value="ACJ79195.1"/>
    <property type="molecule type" value="Genomic_DNA"/>
</dbReference>
<dbReference type="SMR" id="B7HLA6"/>
<dbReference type="KEGG" id="bcr:BCAH187_A3819"/>
<dbReference type="HOGENOM" id="CLU_018697_2_0_9"/>
<dbReference type="Proteomes" id="UP000002214">
    <property type="component" value="Chromosome"/>
</dbReference>
<dbReference type="GO" id="GO:0005829">
    <property type="term" value="C:cytosol"/>
    <property type="evidence" value="ECO:0007669"/>
    <property type="project" value="TreeGrafter"/>
</dbReference>
<dbReference type="GO" id="GO:0051539">
    <property type="term" value="F:4 iron, 4 sulfur cluster binding"/>
    <property type="evidence" value="ECO:0007669"/>
    <property type="project" value="UniProtKB-UniRule"/>
</dbReference>
<dbReference type="GO" id="GO:0046872">
    <property type="term" value="F:metal ion binding"/>
    <property type="evidence" value="ECO:0007669"/>
    <property type="project" value="UniProtKB-KW"/>
</dbReference>
<dbReference type="GO" id="GO:0035597">
    <property type="term" value="F:N6-isopentenyladenosine methylthiotransferase activity"/>
    <property type="evidence" value="ECO:0007669"/>
    <property type="project" value="TreeGrafter"/>
</dbReference>
<dbReference type="CDD" id="cd01335">
    <property type="entry name" value="Radical_SAM"/>
    <property type="match status" value="1"/>
</dbReference>
<dbReference type="FunFam" id="3.40.50.12160:FF:000006">
    <property type="entry name" value="tRNA-2-methylthio-N(6)-dimethylallyladenosine synthase"/>
    <property type="match status" value="1"/>
</dbReference>
<dbReference type="FunFam" id="3.80.30.20:FF:000001">
    <property type="entry name" value="tRNA-2-methylthio-N(6)-dimethylallyladenosine synthase 2"/>
    <property type="match status" value="1"/>
</dbReference>
<dbReference type="Gene3D" id="3.40.50.12160">
    <property type="entry name" value="Methylthiotransferase, N-terminal domain"/>
    <property type="match status" value="1"/>
</dbReference>
<dbReference type="Gene3D" id="3.80.30.20">
    <property type="entry name" value="tm_1862 like domain"/>
    <property type="match status" value="1"/>
</dbReference>
<dbReference type="HAMAP" id="MF_01864">
    <property type="entry name" value="tRNA_metthiotr_MiaB"/>
    <property type="match status" value="1"/>
</dbReference>
<dbReference type="InterPro" id="IPR006638">
    <property type="entry name" value="Elp3/MiaA/NifB-like_rSAM"/>
</dbReference>
<dbReference type="InterPro" id="IPR005839">
    <property type="entry name" value="Methylthiotransferase"/>
</dbReference>
<dbReference type="InterPro" id="IPR020612">
    <property type="entry name" value="Methylthiotransferase_CS"/>
</dbReference>
<dbReference type="InterPro" id="IPR013848">
    <property type="entry name" value="Methylthiotransferase_N"/>
</dbReference>
<dbReference type="InterPro" id="IPR038135">
    <property type="entry name" value="Methylthiotransferase_N_sf"/>
</dbReference>
<dbReference type="InterPro" id="IPR006463">
    <property type="entry name" value="MiaB_methiolase"/>
</dbReference>
<dbReference type="InterPro" id="IPR007197">
    <property type="entry name" value="rSAM"/>
</dbReference>
<dbReference type="InterPro" id="IPR023404">
    <property type="entry name" value="rSAM_horseshoe"/>
</dbReference>
<dbReference type="InterPro" id="IPR002792">
    <property type="entry name" value="TRAM_dom"/>
</dbReference>
<dbReference type="NCBIfam" id="TIGR01574">
    <property type="entry name" value="miaB-methiolase"/>
    <property type="match status" value="1"/>
</dbReference>
<dbReference type="NCBIfam" id="TIGR00089">
    <property type="entry name" value="MiaB/RimO family radical SAM methylthiotransferase"/>
    <property type="match status" value="1"/>
</dbReference>
<dbReference type="PANTHER" id="PTHR43020">
    <property type="entry name" value="CDK5 REGULATORY SUBUNIT-ASSOCIATED PROTEIN 1"/>
    <property type="match status" value="1"/>
</dbReference>
<dbReference type="PANTHER" id="PTHR43020:SF2">
    <property type="entry name" value="MITOCHONDRIAL TRNA METHYLTHIOTRANSFERASE CDK5RAP1"/>
    <property type="match status" value="1"/>
</dbReference>
<dbReference type="Pfam" id="PF04055">
    <property type="entry name" value="Radical_SAM"/>
    <property type="match status" value="1"/>
</dbReference>
<dbReference type="Pfam" id="PF01938">
    <property type="entry name" value="TRAM"/>
    <property type="match status" value="1"/>
</dbReference>
<dbReference type="Pfam" id="PF00919">
    <property type="entry name" value="UPF0004"/>
    <property type="match status" value="1"/>
</dbReference>
<dbReference type="SFLD" id="SFLDF00273">
    <property type="entry name" value="(dimethylallyl)adenosine_tRNA"/>
    <property type="match status" value="1"/>
</dbReference>
<dbReference type="SFLD" id="SFLDG01082">
    <property type="entry name" value="B12-binding_domain_containing"/>
    <property type="match status" value="1"/>
</dbReference>
<dbReference type="SFLD" id="SFLDG01061">
    <property type="entry name" value="methylthiotransferase"/>
    <property type="match status" value="1"/>
</dbReference>
<dbReference type="SMART" id="SM00729">
    <property type="entry name" value="Elp3"/>
    <property type="match status" value="1"/>
</dbReference>
<dbReference type="SUPFAM" id="SSF102114">
    <property type="entry name" value="Radical SAM enzymes"/>
    <property type="match status" value="1"/>
</dbReference>
<dbReference type="PROSITE" id="PS51449">
    <property type="entry name" value="MTTASE_N"/>
    <property type="match status" value="1"/>
</dbReference>
<dbReference type="PROSITE" id="PS01278">
    <property type="entry name" value="MTTASE_RADICAL"/>
    <property type="match status" value="1"/>
</dbReference>
<dbReference type="PROSITE" id="PS51918">
    <property type="entry name" value="RADICAL_SAM"/>
    <property type="match status" value="1"/>
</dbReference>
<dbReference type="PROSITE" id="PS50926">
    <property type="entry name" value="TRAM"/>
    <property type="match status" value="1"/>
</dbReference>
<feature type="chain" id="PRO_0000374125" description="tRNA-2-methylthio-N(6)-dimethylallyladenosine synthase">
    <location>
        <begin position="1"/>
        <end position="509"/>
    </location>
</feature>
<feature type="domain" description="MTTase N-terminal" evidence="1">
    <location>
        <begin position="66"/>
        <end position="184"/>
    </location>
</feature>
<feature type="domain" description="Radical SAM core" evidence="2">
    <location>
        <begin position="207"/>
        <end position="437"/>
    </location>
</feature>
<feature type="domain" description="TRAM" evidence="1">
    <location>
        <begin position="440"/>
        <end position="503"/>
    </location>
</feature>
<feature type="region of interest" description="Disordered" evidence="3">
    <location>
        <begin position="1"/>
        <end position="26"/>
    </location>
</feature>
<feature type="compositionally biased region" description="Polar residues" evidence="3">
    <location>
        <begin position="1"/>
        <end position="15"/>
    </location>
</feature>
<feature type="compositionally biased region" description="Basic and acidic residues" evidence="3">
    <location>
        <begin position="16"/>
        <end position="25"/>
    </location>
</feature>
<feature type="binding site" evidence="1">
    <location>
        <position position="75"/>
    </location>
    <ligand>
        <name>[4Fe-4S] cluster</name>
        <dbReference type="ChEBI" id="CHEBI:49883"/>
        <label>1</label>
    </ligand>
</feature>
<feature type="binding site" evidence="1">
    <location>
        <position position="111"/>
    </location>
    <ligand>
        <name>[4Fe-4S] cluster</name>
        <dbReference type="ChEBI" id="CHEBI:49883"/>
        <label>1</label>
    </ligand>
</feature>
<feature type="binding site" evidence="1">
    <location>
        <position position="145"/>
    </location>
    <ligand>
        <name>[4Fe-4S] cluster</name>
        <dbReference type="ChEBI" id="CHEBI:49883"/>
        <label>1</label>
    </ligand>
</feature>
<feature type="binding site" evidence="1">
    <location>
        <position position="221"/>
    </location>
    <ligand>
        <name>[4Fe-4S] cluster</name>
        <dbReference type="ChEBI" id="CHEBI:49883"/>
        <label>2</label>
        <note>4Fe-4S-S-AdoMet</note>
    </ligand>
</feature>
<feature type="binding site" evidence="1">
    <location>
        <position position="225"/>
    </location>
    <ligand>
        <name>[4Fe-4S] cluster</name>
        <dbReference type="ChEBI" id="CHEBI:49883"/>
        <label>2</label>
        <note>4Fe-4S-S-AdoMet</note>
    </ligand>
</feature>
<feature type="binding site" evidence="1">
    <location>
        <position position="228"/>
    </location>
    <ligand>
        <name>[4Fe-4S] cluster</name>
        <dbReference type="ChEBI" id="CHEBI:49883"/>
        <label>2</label>
        <note>4Fe-4S-S-AdoMet</note>
    </ligand>
</feature>
<organism>
    <name type="scientific">Bacillus cereus (strain AH187)</name>
    <dbReference type="NCBI Taxonomy" id="405534"/>
    <lineage>
        <taxon>Bacteria</taxon>
        <taxon>Bacillati</taxon>
        <taxon>Bacillota</taxon>
        <taxon>Bacilli</taxon>
        <taxon>Bacillales</taxon>
        <taxon>Bacillaceae</taxon>
        <taxon>Bacillus</taxon>
        <taxon>Bacillus cereus group</taxon>
    </lineage>
</organism>
<keyword id="KW-0004">4Fe-4S</keyword>
<keyword id="KW-0963">Cytoplasm</keyword>
<keyword id="KW-0408">Iron</keyword>
<keyword id="KW-0411">Iron-sulfur</keyword>
<keyword id="KW-0479">Metal-binding</keyword>
<keyword id="KW-0949">S-adenosyl-L-methionine</keyword>
<keyword id="KW-0808">Transferase</keyword>
<keyword id="KW-0819">tRNA processing</keyword>
<gene>
    <name evidence="1" type="primary">miaB</name>
    <name type="ordered locus">BCAH187_A3819</name>
</gene>
<comment type="function">
    <text evidence="1">Catalyzes the methylthiolation of N6-(dimethylallyl)adenosine (i(6)A), leading to the formation of 2-methylthio-N6-(dimethylallyl)adenosine (ms(2)i(6)A) at position 37 in tRNAs that read codons beginning with uridine.</text>
</comment>
<comment type="catalytic activity">
    <reaction evidence="1">
        <text>N(6)-dimethylallyladenosine(37) in tRNA + (sulfur carrier)-SH + AH2 + 2 S-adenosyl-L-methionine = 2-methylsulfanyl-N(6)-dimethylallyladenosine(37) in tRNA + (sulfur carrier)-H + 5'-deoxyadenosine + L-methionine + A + S-adenosyl-L-homocysteine + 2 H(+)</text>
        <dbReference type="Rhea" id="RHEA:37067"/>
        <dbReference type="Rhea" id="RHEA-COMP:10375"/>
        <dbReference type="Rhea" id="RHEA-COMP:10376"/>
        <dbReference type="Rhea" id="RHEA-COMP:14737"/>
        <dbReference type="Rhea" id="RHEA-COMP:14739"/>
        <dbReference type="ChEBI" id="CHEBI:13193"/>
        <dbReference type="ChEBI" id="CHEBI:15378"/>
        <dbReference type="ChEBI" id="CHEBI:17319"/>
        <dbReference type="ChEBI" id="CHEBI:17499"/>
        <dbReference type="ChEBI" id="CHEBI:29917"/>
        <dbReference type="ChEBI" id="CHEBI:57844"/>
        <dbReference type="ChEBI" id="CHEBI:57856"/>
        <dbReference type="ChEBI" id="CHEBI:59789"/>
        <dbReference type="ChEBI" id="CHEBI:64428"/>
        <dbReference type="ChEBI" id="CHEBI:74415"/>
        <dbReference type="ChEBI" id="CHEBI:74417"/>
        <dbReference type="EC" id="2.8.4.3"/>
    </reaction>
</comment>
<comment type="cofactor">
    <cofactor evidence="1">
        <name>[4Fe-4S] cluster</name>
        <dbReference type="ChEBI" id="CHEBI:49883"/>
    </cofactor>
    <text evidence="1">Binds 2 [4Fe-4S] clusters. One cluster is coordinated with 3 cysteines and an exchangeable S-adenosyl-L-methionine.</text>
</comment>
<comment type="subunit">
    <text evidence="1">Monomer.</text>
</comment>
<comment type="subcellular location">
    <subcellularLocation>
        <location evidence="1">Cytoplasm</location>
    </subcellularLocation>
</comment>
<comment type="similarity">
    <text evidence="1">Belongs to the methylthiotransferase family. MiaB subfamily.</text>
</comment>